<sequence>MSDKAAGETKNGNGATTEPSLNILAQYVKDLSFESPGAPLSLRPREKAPSININVNVNANPLSETDFDVVLTLEAKAVDGKDILFNTELVYGGVFRIQGIPQEHMLPLLFIECPRLLFPFARQIIADATRNGGYPPLMIDPIDFAQMFQQRMAEEQAKSAVKS</sequence>
<feature type="chain" id="PRO_0000055353" description="Protein-export protein SecB">
    <location>
        <begin position="1"/>
        <end position="163"/>
    </location>
</feature>
<organism>
    <name type="scientific">Brucella abortus (strain 2308)</name>
    <dbReference type="NCBI Taxonomy" id="359391"/>
    <lineage>
        <taxon>Bacteria</taxon>
        <taxon>Pseudomonadati</taxon>
        <taxon>Pseudomonadota</taxon>
        <taxon>Alphaproteobacteria</taxon>
        <taxon>Hyphomicrobiales</taxon>
        <taxon>Brucellaceae</taxon>
        <taxon>Brucella/Ochrobactrum group</taxon>
        <taxon>Brucella</taxon>
    </lineage>
</organism>
<keyword id="KW-0143">Chaperone</keyword>
<keyword id="KW-0963">Cytoplasm</keyword>
<keyword id="KW-0653">Protein transport</keyword>
<keyword id="KW-1185">Reference proteome</keyword>
<keyword id="KW-0811">Translocation</keyword>
<keyword id="KW-0813">Transport</keyword>
<accession>P0C126</accession>
<accession>Q57AI6</accession>
<gene>
    <name evidence="1" type="primary">secB</name>
    <name type="ordered locus">BAB1_2073</name>
</gene>
<dbReference type="EMBL" id="AM040264">
    <property type="protein sequence ID" value="CAJ12029.1"/>
    <property type="molecule type" value="Genomic_DNA"/>
</dbReference>
<dbReference type="RefSeq" id="WP_002965136.1">
    <property type="nucleotide sequence ID" value="NZ_KN046823.1"/>
</dbReference>
<dbReference type="SMR" id="P0C126"/>
<dbReference type="STRING" id="359391.BAB1_2073"/>
<dbReference type="GeneID" id="97534666"/>
<dbReference type="KEGG" id="bmf:BAB1_2073"/>
<dbReference type="PATRIC" id="fig|359391.11.peg.1306"/>
<dbReference type="HOGENOM" id="CLU_111574_0_0_5"/>
<dbReference type="PhylomeDB" id="P0C126"/>
<dbReference type="Proteomes" id="UP000002719">
    <property type="component" value="Chromosome I"/>
</dbReference>
<dbReference type="GO" id="GO:0005737">
    <property type="term" value="C:cytoplasm"/>
    <property type="evidence" value="ECO:0007669"/>
    <property type="project" value="UniProtKB-SubCell"/>
</dbReference>
<dbReference type="GO" id="GO:0051082">
    <property type="term" value="F:unfolded protein binding"/>
    <property type="evidence" value="ECO:0007669"/>
    <property type="project" value="InterPro"/>
</dbReference>
<dbReference type="GO" id="GO:0006457">
    <property type="term" value="P:protein folding"/>
    <property type="evidence" value="ECO:0007669"/>
    <property type="project" value="UniProtKB-UniRule"/>
</dbReference>
<dbReference type="GO" id="GO:0051262">
    <property type="term" value="P:protein tetramerization"/>
    <property type="evidence" value="ECO:0007669"/>
    <property type="project" value="InterPro"/>
</dbReference>
<dbReference type="GO" id="GO:0015031">
    <property type="term" value="P:protein transport"/>
    <property type="evidence" value="ECO:0007669"/>
    <property type="project" value="UniProtKB-UniRule"/>
</dbReference>
<dbReference type="Gene3D" id="3.10.420.10">
    <property type="entry name" value="SecB-like"/>
    <property type="match status" value="1"/>
</dbReference>
<dbReference type="HAMAP" id="MF_00821">
    <property type="entry name" value="SecB"/>
    <property type="match status" value="1"/>
</dbReference>
<dbReference type="InterPro" id="IPR003708">
    <property type="entry name" value="SecB"/>
</dbReference>
<dbReference type="InterPro" id="IPR035958">
    <property type="entry name" value="SecB-like_sf"/>
</dbReference>
<dbReference type="NCBIfam" id="NF004392">
    <property type="entry name" value="PRK05751.1-3"/>
    <property type="match status" value="1"/>
</dbReference>
<dbReference type="NCBIfam" id="TIGR00809">
    <property type="entry name" value="secB"/>
    <property type="match status" value="1"/>
</dbReference>
<dbReference type="PANTHER" id="PTHR36918">
    <property type="match status" value="1"/>
</dbReference>
<dbReference type="PANTHER" id="PTHR36918:SF1">
    <property type="entry name" value="PROTEIN-EXPORT PROTEIN SECB"/>
    <property type="match status" value="1"/>
</dbReference>
<dbReference type="Pfam" id="PF02556">
    <property type="entry name" value="SecB"/>
    <property type="match status" value="1"/>
</dbReference>
<dbReference type="PRINTS" id="PR01594">
    <property type="entry name" value="SECBCHAPRONE"/>
</dbReference>
<dbReference type="SUPFAM" id="SSF54611">
    <property type="entry name" value="SecB-like"/>
    <property type="match status" value="1"/>
</dbReference>
<protein>
    <recommendedName>
        <fullName evidence="1">Protein-export protein SecB</fullName>
    </recommendedName>
</protein>
<reference key="1">
    <citation type="journal article" date="2005" name="Infect. Immun.">
        <title>Whole-genome analyses of speciation events in pathogenic Brucellae.</title>
        <authorList>
            <person name="Chain P.S."/>
            <person name="Comerci D.J."/>
            <person name="Tolmasky M.E."/>
            <person name="Larimer F.W."/>
            <person name="Malfatti S.A."/>
            <person name="Vergez L.M."/>
            <person name="Aguero F."/>
            <person name="Land M.L."/>
            <person name="Ugalde R.A."/>
            <person name="Garcia E."/>
        </authorList>
    </citation>
    <scope>NUCLEOTIDE SEQUENCE [LARGE SCALE GENOMIC DNA]</scope>
    <source>
        <strain>2308</strain>
    </source>
</reference>
<proteinExistence type="inferred from homology"/>
<evidence type="ECO:0000255" key="1">
    <source>
        <dbReference type="HAMAP-Rule" id="MF_00821"/>
    </source>
</evidence>
<name>SECB_BRUA2</name>
<comment type="function">
    <text evidence="1">One of the proteins required for the normal export of preproteins out of the cell cytoplasm. It is a molecular chaperone that binds to a subset of precursor proteins, maintaining them in a translocation-competent state. It also specifically binds to its receptor SecA.</text>
</comment>
<comment type="subunit">
    <text evidence="1">Homotetramer, a dimer of dimers. One homotetramer interacts with 1 SecA dimer.</text>
</comment>
<comment type="subcellular location">
    <subcellularLocation>
        <location evidence="1">Cytoplasm</location>
    </subcellularLocation>
</comment>
<comment type="similarity">
    <text evidence="1">Belongs to the SecB family.</text>
</comment>